<name>LSRD_YERPP</name>
<sequence length="333" mass="35134">MNLYRRYGWELTLAALLVLEILLFGLSNSRMLDINVLLFSTSDFICIGIVALPLTMVIVSGGIDISFGSTIGLCAIFLGIVFQAGVPMSVAIPLTVLVGALCGLINAGLILYTGVNPLVITLGTLYLFGGSALLLSGLSGATGYEGIGGFPAAFTDFANQTLFGLPIPLVIFMLCVLLFWLLMHRTHSGRHVFLIGQSSRVARYSALPIARTLCMLYAMTGVASAISAILLVSYFGSARSDLGASFLMPAITAVVLGGANIYGGSGSILGTALAVLLVGYLQQGLQMIGTPNQISSALSGALLILVVVGRSISLHRHLIYEWLQRRRSRKASA</sequence>
<keyword id="KW-0997">Cell inner membrane</keyword>
<keyword id="KW-1003">Cell membrane</keyword>
<keyword id="KW-0472">Membrane</keyword>
<keyword id="KW-0812">Transmembrane</keyword>
<keyword id="KW-1133">Transmembrane helix</keyword>
<keyword id="KW-0813">Transport</keyword>
<proteinExistence type="inferred from homology"/>
<reference key="1">
    <citation type="submission" date="2007-02" db="EMBL/GenBank/DDBJ databases">
        <title>Complete sequence of chromosome of Yersinia pestis Pestoides F.</title>
        <authorList>
            <consortium name="US DOE Joint Genome Institute"/>
            <person name="Copeland A."/>
            <person name="Lucas S."/>
            <person name="Lapidus A."/>
            <person name="Barry K."/>
            <person name="Detter J.C."/>
            <person name="Glavina del Rio T."/>
            <person name="Hammon N."/>
            <person name="Israni S."/>
            <person name="Dalin E."/>
            <person name="Tice H."/>
            <person name="Pitluck S."/>
            <person name="Di Bartolo G."/>
            <person name="Chain P."/>
            <person name="Malfatti S."/>
            <person name="Shin M."/>
            <person name="Vergez L."/>
            <person name="Schmutz J."/>
            <person name="Larimer F."/>
            <person name="Land M."/>
            <person name="Hauser L."/>
            <person name="Worsham P."/>
            <person name="Chu M."/>
            <person name="Bearden S."/>
            <person name="Garcia E."/>
            <person name="Richardson P."/>
        </authorList>
    </citation>
    <scope>NUCLEOTIDE SEQUENCE [LARGE SCALE GENOMIC DNA]</scope>
    <source>
        <strain>Pestoides F</strain>
    </source>
</reference>
<comment type="function">
    <text evidence="1">Part of the ABC transporter complex LsrABCD involved in autoinducer 2 (AI-2) import. Probably responsible for the translocation of the substrate across the membrane (By similarity).</text>
</comment>
<comment type="subunit">
    <text evidence="1">The complex is composed of two ATP-binding proteins (LsrA), two transmembrane proteins (LsrC and LsrD) and a solute-binding protein (LsrB).</text>
</comment>
<comment type="subcellular location">
    <subcellularLocation>
        <location evidence="1">Cell inner membrane</location>
        <topology evidence="1">Multi-pass membrane protein</topology>
    </subcellularLocation>
</comment>
<comment type="similarity">
    <text evidence="3">Belongs to the binding-protein-dependent transport system permease family. AraH/RbsC subfamily.</text>
</comment>
<organism>
    <name type="scientific">Yersinia pestis (strain Pestoides F)</name>
    <dbReference type="NCBI Taxonomy" id="386656"/>
    <lineage>
        <taxon>Bacteria</taxon>
        <taxon>Pseudomonadati</taxon>
        <taxon>Pseudomonadota</taxon>
        <taxon>Gammaproteobacteria</taxon>
        <taxon>Enterobacterales</taxon>
        <taxon>Yersiniaceae</taxon>
        <taxon>Yersinia</taxon>
    </lineage>
</organism>
<feature type="chain" id="PRO_0000351381" description="Autoinducer 2 import system permease protein LsrD">
    <location>
        <begin position="1"/>
        <end position="333"/>
    </location>
</feature>
<feature type="transmembrane region" description="Helical" evidence="2">
    <location>
        <begin position="7"/>
        <end position="27"/>
    </location>
</feature>
<feature type="transmembrane region" description="Helical" evidence="2">
    <location>
        <begin position="45"/>
        <end position="65"/>
    </location>
</feature>
<feature type="transmembrane region" description="Helical" evidence="2">
    <location>
        <begin position="67"/>
        <end position="87"/>
    </location>
</feature>
<feature type="transmembrane region" description="Helical" evidence="2">
    <location>
        <begin position="90"/>
        <end position="110"/>
    </location>
</feature>
<feature type="transmembrane region" description="Helical" evidence="2">
    <location>
        <begin position="118"/>
        <end position="138"/>
    </location>
</feature>
<feature type="transmembrane region" description="Helical" evidence="2">
    <location>
        <begin position="162"/>
        <end position="182"/>
    </location>
</feature>
<feature type="transmembrane region" description="Helical" evidence="2">
    <location>
        <begin position="212"/>
        <end position="232"/>
    </location>
</feature>
<feature type="transmembrane region" description="Helical" evidence="2">
    <location>
        <begin position="240"/>
        <end position="260"/>
    </location>
</feature>
<feature type="transmembrane region" description="Helical" evidence="2">
    <location>
        <begin position="261"/>
        <end position="281"/>
    </location>
</feature>
<feature type="transmembrane region" description="Helical" evidence="2">
    <location>
        <begin position="288"/>
        <end position="308"/>
    </location>
</feature>
<gene>
    <name type="primary">lsrD</name>
    <name type="ordered locus">YPDSF_3221</name>
</gene>
<protein>
    <recommendedName>
        <fullName>Autoinducer 2 import system permease protein LsrD</fullName>
        <shortName>AI-2 import system permease protein LsrD</shortName>
    </recommendedName>
</protein>
<dbReference type="EMBL" id="CP000668">
    <property type="protein sequence ID" value="ABP41579.1"/>
    <property type="molecule type" value="Genomic_DNA"/>
</dbReference>
<dbReference type="RefSeq" id="WP_002209190.1">
    <property type="nucleotide sequence ID" value="NZ_CP009715.1"/>
</dbReference>
<dbReference type="GeneID" id="57974200"/>
<dbReference type="KEGG" id="ypp:YPDSF_3221"/>
<dbReference type="PATRIC" id="fig|386656.14.peg.1123"/>
<dbReference type="GO" id="GO:0005886">
    <property type="term" value="C:plasma membrane"/>
    <property type="evidence" value="ECO:0007669"/>
    <property type="project" value="UniProtKB-SubCell"/>
</dbReference>
<dbReference type="GO" id="GO:0022857">
    <property type="term" value="F:transmembrane transporter activity"/>
    <property type="evidence" value="ECO:0007669"/>
    <property type="project" value="InterPro"/>
</dbReference>
<dbReference type="CDD" id="cd06579">
    <property type="entry name" value="TM_PBP1_transp_AraH_like"/>
    <property type="match status" value="1"/>
</dbReference>
<dbReference type="InterPro" id="IPR001851">
    <property type="entry name" value="ABC_transp_permease"/>
</dbReference>
<dbReference type="NCBIfam" id="NF011612">
    <property type="entry name" value="PRK15038.1"/>
    <property type="match status" value="1"/>
</dbReference>
<dbReference type="PANTHER" id="PTHR32196">
    <property type="entry name" value="ABC TRANSPORTER PERMEASE PROTEIN YPHD-RELATED-RELATED"/>
    <property type="match status" value="1"/>
</dbReference>
<dbReference type="PANTHER" id="PTHR32196:SF71">
    <property type="entry name" value="AUTOINDUCER 2 IMPORT SYSTEM PERMEASE PROTEIN LSRD"/>
    <property type="match status" value="1"/>
</dbReference>
<dbReference type="Pfam" id="PF02653">
    <property type="entry name" value="BPD_transp_2"/>
    <property type="match status" value="1"/>
</dbReference>
<evidence type="ECO:0000250" key="1"/>
<evidence type="ECO:0000255" key="2"/>
<evidence type="ECO:0000305" key="3"/>
<accession>A4TQL7</accession>